<accession>Q4HZ68</accession>
<accession>A0A098DM60</accession>
<accession>A0A0E0S952</accession>
<accession>V6RQV2</accession>
<sequence length="744" mass="81697">MADDGMLLNFDLGSGPVKPQVKFKGGRWRDRKQAEKSARIASGKQSQPKSSTDGPDDGRSSKRQRTDDGDFDNGFDYKSANRFGSRPKHFDNDGHGGASGQSRSHQSDGKSKQVISRLFSFNPAQKTEADEKQGEWTAPEATNAPLSDVANFGTLTISARLVDELGKMGLERPTGIQNKVIPHMLTSSSDAFVQAETGSGKTLAYLLPILHRVLLLSVKGGAQIHRDSGAFAIIVAPTRELAKQVHTVLEKLIRPFPWLVSTAITGGESKKAEKARIRKGVNFLVATPGRLADHIDNTKALNLSIVRWLILDEGDRLMDLGFEDDLKKVITALKAVDVSDTLPDGTPLKALPERRVTVLCSATMKMNVQKLGEMSLADATFLAAKKEDMELDVQKSEMKAPAQLHQYYSVVPAKLRLVTLISYLKSTFSRRGKTMKAIIFISCADSVDFHYELLRDPNTTEAPVAASKEAESISKTVSKAAYITSPASPEVVLHRMHGSLSQPIRTATLKSFSACKSPSLLITTDVSSRGLDIPSVDLVIEYDPAFSFADHIHRVGRTARAGKPGDALLFLLPGTEEGYIELMKGSTTPTSQSYDSILQKGMMTKLEFPVETTAKPEDGHSFHDKAESLQLHIEQRLLEDTKRLELARNGFKSHIRAYATHTKEERKHFDISELHLGHTAKSYGLREAPGGIGQGVERKTKKRTNKGVEKDPEQAAGDERQNQNIIRKKSMMLMNSAADEFNIG</sequence>
<keyword id="KW-0067">ATP-binding</keyword>
<keyword id="KW-0347">Helicase</keyword>
<keyword id="KW-0378">Hydrolase</keyword>
<keyword id="KW-0547">Nucleotide-binding</keyword>
<keyword id="KW-0539">Nucleus</keyword>
<keyword id="KW-1185">Reference proteome</keyword>
<keyword id="KW-0690">Ribosome biogenesis</keyword>
<keyword id="KW-0694">RNA-binding</keyword>
<keyword id="KW-0698">rRNA processing</keyword>
<comment type="function">
    <text evidence="1">ATP-binding RNA helicase involved in the biogenesis of 60S ribosomal subunits and is required for the normal formation of 25S and 5.8S rRNAs.</text>
</comment>
<comment type="catalytic activity">
    <reaction>
        <text>ATP + H2O = ADP + phosphate + H(+)</text>
        <dbReference type="Rhea" id="RHEA:13065"/>
        <dbReference type="ChEBI" id="CHEBI:15377"/>
        <dbReference type="ChEBI" id="CHEBI:15378"/>
        <dbReference type="ChEBI" id="CHEBI:30616"/>
        <dbReference type="ChEBI" id="CHEBI:43474"/>
        <dbReference type="ChEBI" id="CHEBI:456216"/>
        <dbReference type="EC" id="3.6.4.13"/>
    </reaction>
</comment>
<comment type="subcellular location">
    <subcellularLocation>
        <location evidence="1">Nucleus</location>
        <location evidence="1">Nucleolus</location>
    </subcellularLocation>
</comment>
<comment type="domain">
    <text>The Q motif is unique to and characteristic of the DEAD box family of RNA helicases and controls ATP binding and hydrolysis.</text>
</comment>
<comment type="miscellaneous">
    <text>Present with 1460 molecules/cell in log phase SD medium.</text>
</comment>
<comment type="similarity">
    <text evidence="5">Belongs to the DEAD box helicase family. DDX31/DBP7 subfamily.</text>
</comment>
<evidence type="ECO:0000250" key="1"/>
<evidence type="ECO:0000255" key="2">
    <source>
        <dbReference type="PROSITE-ProRule" id="PRU00541"/>
    </source>
</evidence>
<evidence type="ECO:0000255" key="3">
    <source>
        <dbReference type="PROSITE-ProRule" id="PRU00542"/>
    </source>
</evidence>
<evidence type="ECO:0000256" key="4">
    <source>
        <dbReference type="SAM" id="MobiDB-lite"/>
    </source>
</evidence>
<evidence type="ECO:0000305" key="5"/>
<reference key="1">
    <citation type="journal article" date="2007" name="Science">
        <title>The Fusarium graminearum genome reveals a link between localized polymorphism and pathogen specialization.</title>
        <authorList>
            <person name="Cuomo C.A."/>
            <person name="Gueldener U."/>
            <person name="Xu J.-R."/>
            <person name="Trail F."/>
            <person name="Turgeon B.G."/>
            <person name="Di Pietro A."/>
            <person name="Walton J.D."/>
            <person name="Ma L.-J."/>
            <person name="Baker S.E."/>
            <person name="Rep M."/>
            <person name="Adam G."/>
            <person name="Antoniw J."/>
            <person name="Baldwin T."/>
            <person name="Calvo S.E."/>
            <person name="Chang Y.-L."/>
            <person name="DeCaprio D."/>
            <person name="Gale L.R."/>
            <person name="Gnerre S."/>
            <person name="Goswami R.S."/>
            <person name="Hammond-Kosack K."/>
            <person name="Harris L.J."/>
            <person name="Hilburn K."/>
            <person name="Kennell J.C."/>
            <person name="Kroken S."/>
            <person name="Magnuson J.K."/>
            <person name="Mannhaupt G."/>
            <person name="Mauceli E.W."/>
            <person name="Mewes H.-W."/>
            <person name="Mitterbauer R."/>
            <person name="Muehlbauer G."/>
            <person name="Muensterkoetter M."/>
            <person name="Nelson D."/>
            <person name="O'Donnell K."/>
            <person name="Ouellet T."/>
            <person name="Qi W."/>
            <person name="Quesneville H."/>
            <person name="Roncero M.I.G."/>
            <person name="Seong K.-Y."/>
            <person name="Tetko I.V."/>
            <person name="Urban M."/>
            <person name="Waalwijk C."/>
            <person name="Ward T.J."/>
            <person name="Yao J."/>
            <person name="Birren B.W."/>
            <person name="Kistler H.C."/>
        </authorList>
    </citation>
    <scope>NUCLEOTIDE SEQUENCE [LARGE SCALE GENOMIC DNA]</scope>
    <source>
        <strain>ATCC MYA-4620 / CBS 123657 / FGSC 9075 / NRRL 31084 / PH-1</strain>
    </source>
</reference>
<reference key="2">
    <citation type="journal article" date="2010" name="Nature">
        <title>Comparative genomics reveals mobile pathogenicity chromosomes in Fusarium.</title>
        <authorList>
            <person name="Ma L.-J."/>
            <person name="van der Does H.C."/>
            <person name="Borkovich K.A."/>
            <person name="Coleman J.J."/>
            <person name="Daboussi M.-J."/>
            <person name="Di Pietro A."/>
            <person name="Dufresne M."/>
            <person name="Freitag M."/>
            <person name="Grabherr M."/>
            <person name="Henrissat B."/>
            <person name="Houterman P.M."/>
            <person name="Kang S."/>
            <person name="Shim W.-B."/>
            <person name="Woloshuk C."/>
            <person name="Xie X."/>
            <person name="Xu J.-R."/>
            <person name="Antoniw J."/>
            <person name="Baker S.E."/>
            <person name="Bluhm B.H."/>
            <person name="Breakspear A."/>
            <person name="Brown D.W."/>
            <person name="Butchko R.A.E."/>
            <person name="Chapman S."/>
            <person name="Coulson R."/>
            <person name="Coutinho P.M."/>
            <person name="Danchin E.G.J."/>
            <person name="Diener A."/>
            <person name="Gale L.R."/>
            <person name="Gardiner D.M."/>
            <person name="Goff S."/>
            <person name="Hammond-Kosack K.E."/>
            <person name="Hilburn K."/>
            <person name="Hua-Van A."/>
            <person name="Jonkers W."/>
            <person name="Kazan K."/>
            <person name="Kodira C.D."/>
            <person name="Koehrsen M."/>
            <person name="Kumar L."/>
            <person name="Lee Y.-H."/>
            <person name="Li L."/>
            <person name="Manners J.M."/>
            <person name="Miranda-Saavedra D."/>
            <person name="Mukherjee M."/>
            <person name="Park G."/>
            <person name="Park J."/>
            <person name="Park S.-Y."/>
            <person name="Proctor R.H."/>
            <person name="Regev A."/>
            <person name="Ruiz-Roldan M.C."/>
            <person name="Sain D."/>
            <person name="Sakthikumar S."/>
            <person name="Sykes S."/>
            <person name="Schwartz D.C."/>
            <person name="Turgeon B.G."/>
            <person name="Wapinski I."/>
            <person name="Yoder O."/>
            <person name="Young S."/>
            <person name="Zeng Q."/>
            <person name="Zhou S."/>
            <person name="Galagan J."/>
            <person name="Cuomo C.A."/>
            <person name="Kistler H.C."/>
            <person name="Rep M."/>
        </authorList>
    </citation>
    <scope>GENOME REANNOTATION</scope>
    <source>
        <strain>ATCC MYA-4620 / CBS 123657 / FGSC 9075 / NRRL 31084 / PH-1</strain>
    </source>
</reference>
<reference key="3">
    <citation type="journal article" date="2015" name="BMC Genomics">
        <title>The completed genome sequence of the pathogenic ascomycete fungus Fusarium graminearum.</title>
        <authorList>
            <person name="King R."/>
            <person name="Urban M."/>
            <person name="Hammond-Kosack M.C.U."/>
            <person name="Hassani-Pak K."/>
            <person name="Hammond-Kosack K.E."/>
        </authorList>
    </citation>
    <scope>NUCLEOTIDE SEQUENCE [LARGE SCALE GENOMIC DNA]</scope>
    <source>
        <strain>ATCC MYA-4620 / CBS 123657 / FGSC 9075 / NRRL 31084 / PH-1</strain>
    </source>
</reference>
<feature type="chain" id="PRO_0000232256" description="ATP-dependent RNA helicase DBP7">
    <location>
        <begin position="1"/>
        <end position="744"/>
    </location>
</feature>
<feature type="domain" description="Helicase ATP-binding" evidence="2">
    <location>
        <begin position="182"/>
        <end position="382"/>
    </location>
</feature>
<feature type="domain" description="Helicase C-terminal" evidence="3">
    <location>
        <begin position="416"/>
        <end position="614"/>
    </location>
</feature>
<feature type="region of interest" description="Disordered" evidence="4">
    <location>
        <begin position="1"/>
        <end position="113"/>
    </location>
</feature>
<feature type="region of interest" description="Disordered" evidence="4">
    <location>
        <begin position="685"/>
        <end position="724"/>
    </location>
</feature>
<feature type="short sequence motif" description="Q motif">
    <location>
        <begin position="150"/>
        <end position="178"/>
    </location>
</feature>
<feature type="short sequence motif" description="DEAD box">
    <location>
        <begin position="312"/>
        <end position="315"/>
    </location>
</feature>
<feature type="compositionally biased region" description="Basic and acidic residues" evidence="4">
    <location>
        <begin position="27"/>
        <end position="38"/>
    </location>
</feature>
<feature type="compositionally biased region" description="Polar residues" evidence="4">
    <location>
        <begin position="43"/>
        <end position="53"/>
    </location>
</feature>
<feature type="compositionally biased region" description="Basic and acidic residues" evidence="4">
    <location>
        <begin position="56"/>
        <end position="68"/>
    </location>
</feature>
<feature type="compositionally biased region" description="Basic and acidic residues" evidence="4">
    <location>
        <begin position="706"/>
        <end position="721"/>
    </location>
</feature>
<feature type="binding site" evidence="2">
    <location>
        <begin position="195"/>
        <end position="202"/>
    </location>
    <ligand>
        <name>ATP</name>
        <dbReference type="ChEBI" id="CHEBI:30616"/>
    </ligand>
</feature>
<name>DBP7_GIBZE</name>
<dbReference type="EC" id="3.6.4.13"/>
<dbReference type="EMBL" id="DS231668">
    <property type="protein sequence ID" value="ESU16362.1"/>
    <property type="molecule type" value="Genomic_DNA"/>
</dbReference>
<dbReference type="EMBL" id="HG970335">
    <property type="protein sequence ID" value="CEF82965.1"/>
    <property type="molecule type" value="Genomic_DNA"/>
</dbReference>
<dbReference type="RefSeq" id="XP_011327954.1">
    <property type="nucleotide sequence ID" value="XM_011329652.1"/>
</dbReference>
<dbReference type="SMR" id="Q4HZ68"/>
<dbReference type="FunCoup" id="Q4HZ68">
    <property type="interactions" value="761"/>
</dbReference>
<dbReference type="STRING" id="229533.Q4HZ68"/>
<dbReference type="GeneID" id="23556676"/>
<dbReference type="KEGG" id="fgr:FGSG_09740"/>
<dbReference type="VEuPathDB" id="FungiDB:FGRAMPH1_01G26381"/>
<dbReference type="eggNOG" id="KOG0348">
    <property type="taxonomic scope" value="Eukaryota"/>
</dbReference>
<dbReference type="HOGENOM" id="CLU_003041_26_2_1"/>
<dbReference type="InParanoid" id="Q4HZ68"/>
<dbReference type="OrthoDB" id="54227at110618"/>
<dbReference type="Proteomes" id="UP000070720">
    <property type="component" value="Chromosome 4"/>
</dbReference>
<dbReference type="GO" id="GO:0005730">
    <property type="term" value="C:nucleolus"/>
    <property type="evidence" value="ECO:0007669"/>
    <property type="project" value="UniProtKB-SubCell"/>
</dbReference>
<dbReference type="GO" id="GO:0005524">
    <property type="term" value="F:ATP binding"/>
    <property type="evidence" value="ECO:0007669"/>
    <property type="project" value="UniProtKB-KW"/>
</dbReference>
<dbReference type="GO" id="GO:0016887">
    <property type="term" value="F:ATP hydrolysis activity"/>
    <property type="evidence" value="ECO:0007669"/>
    <property type="project" value="RHEA"/>
</dbReference>
<dbReference type="GO" id="GO:0003723">
    <property type="term" value="F:RNA binding"/>
    <property type="evidence" value="ECO:0007669"/>
    <property type="project" value="UniProtKB-KW"/>
</dbReference>
<dbReference type="GO" id="GO:0003724">
    <property type="term" value="F:RNA helicase activity"/>
    <property type="evidence" value="ECO:0007669"/>
    <property type="project" value="UniProtKB-EC"/>
</dbReference>
<dbReference type="GO" id="GO:0006364">
    <property type="term" value="P:rRNA processing"/>
    <property type="evidence" value="ECO:0007669"/>
    <property type="project" value="UniProtKB-KW"/>
</dbReference>
<dbReference type="CDD" id="cd17949">
    <property type="entry name" value="DEADc_DDX31"/>
    <property type="match status" value="1"/>
</dbReference>
<dbReference type="CDD" id="cd18787">
    <property type="entry name" value="SF2_C_DEAD"/>
    <property type="match status" value="1"/>
</dbReference>
<dbReference type="Gene3D" id="3.40.50.300">
    <property type="entry name" value="P-loop containing nucleotide triphosphate hydrolases"/>
    <property type="match status" value="2"/>
</dbReference>
<dbReference type="InterPro" id="IPR011545">
    <property type="entry name" value="DEAD/DEAH_box_helicase_dom"/>
</dbReference>
<dbReference type="InterPro" id="IPR014001">
    <property type="entry name" value="Helicase_ATP-bd"/>
</dbReference>
<dbReference type="InterPro" id="IPR001650">
    <property type="entry name" value="Helicase_C-like"/>
</dbReference>
<dbReference type="InterPro" id="IPR027417">
    <property type="entry name" value="P-loop_NTPase"/>
</dbReference>
<dbReference type="InterPro" id="IPR025313">
    <property type="entry name" value="SPB4-like_CTE"/>
</dbReference>
<dbReference type="PANTHER" id="PTHR24031">
    <property type="entry name" value="RNA HELICASE"/>
    <property type="match status" value="1"/>
</dbReference>
<dbReference type="Pfam" id="PF13959">
    <property type="entry name" value="CTE_SPB4"/>
    <property type="match status" value="1"/>
</dbReference>
<dbReference type="Pfam" id="PF00270">
    <property type="entry name" value="DEAD"/>
    <property type="match status" value="1"/>
</dbReference>
<dbReference type="Pfam" id="PF00271">
    <property type="entry name" value="Helicase_C"/>
    <property type="match status" value="1"/>
</dbReference>
<dbReference type="SMART" id="SM00487">
    <property type="entry name" value="DEXDc"/>
    <property type="match status" value="1"/>
</dbReference>
<dbReference type="SMART" id="SM01178">
    <property type="entry name" value="DUF4217"/>
    <property type="match status" value="1"/>
</dbReference>
<dbReference type="SMART" id="SM00490">
    <property type="entry name" value="HELICc"/>
    <property type="match status" value="1"/>
</dbReference>
<dbReference type="SUPFAM" id="SSF52540">
    <property type="entry name" value="P-loop containing nucleoside triphosphate hydrolases"/>
    <property type="match status" value="1"/>
</dbReference>
<dbReference type="PROSITE" id="PS51192">
    <property type="entry name" value="HELICASE_ATP_BIND_1"/>
    <property type="match status" value="1"/>
</dbReference>
<dbReference type="PROSITE" id="PS51194">
    <property type="entry name" value="HELICASE_CTER"/>
    <property type="match status" value="1"/>
</dbReference>
<dbReference type="PROSITE" id="PS51195">
    <property type="entry name" value="Q_MOTIF"/>
    <property type="match status" value="1"/>
</dbReference>
<organism>
    <name type="scientific">Gibberella zeae (strain ATCC MYA-4620 / CBS 123657 / FGSC 9075 / NRRL 31084 / PH-1)</name>
    <name type="common">Wheat head blight fungus</name>
    <name type="synonym">Fusarium graminearum</name>
    <dbReference type="NCBI Taxonomy" id="229533"/>
    <lineage>
        <taxon>Eukaryota</taxon>
        <taxon>Fungi</taxon>
        <taxon>Dikarya</taxon>
        <taxon>Ascomycota</taxon>
        <taxon>Pezizomycotina</taxon>
        <taxon>Sordariomycetes</taxon>
        <taxon>Hypocreomycetidae</taxon>
        <taxon>Hypocreales</taxon>
        <taxon>Nectriaceae</taxon>
        <taxon>Fusarium</taxon>
    </lineage>
</organism>
<proteinExistence type="inferred from homology"/>
<protein>
    <recommendedName>
        <fullName>ATP-dependent RNA helicase DBP7</fullName>
        <ecNumber>3.6.4.13</ecNumber>
    </recommendedName>
</protein>
<gene>
    <name type="primary">DBP7</name>
    <name type="ORF">FGRRES_09740</name>
    <name type="ORF">FGSG_09740</name>
</gene>